<comment type="function">
    <text evidence="1">Co-chaperone involved in the maturation of iron-sulfur cluster-containing proteins. Seems to help targeting proteins to be folded toward HscA.</text>
</comment>
<comment type="subunit">
    <text evidence="1">Interacts with HscA and stimulates its ATPase activity.</text>
</comment>
<comment type="similarity">
    <text evidence="1">Belongs to the HscB family.</text>
</comment>
<dbReference type="EMBL" id="AE016795">
    <property type="protein sequence ID" value="AAO08958.1"/>
    <property type="molecule type" value="Genomic_DNA"/>
</dbReference>
<dbReference type="RefSeq" id="WP_011078534.1">
    <property type="nucleotide sequence ID" value="NC_004459.3"/>
</dbReference>
<dbReference type="SMR" id="Q8DEZ0"/>
<dbReference type="KEGG" id="vvu:VV1_0435"/>
<dbReference type="HOGENOM" id="CLU_068529_2_0_6"/>
<dbReference type="Proteomes" id="UP000002275">
    <property type="component" value="Chromosome 1"/>
</dbReference>
<dbReference type="GO" id="GO:1990230">
    <property type="term" value="C:iron-sulfur cluster transfer complex"/>
    <property type="evidence" value="ECO:0007669"/>
    <property type="project" value="TreeGrafter"/>
</dbReference>
<dbReference type="GO" id="GO:0001671">
    <property type="term" value="F:ATPase activator activity"/>
    <property type="evidence" value="ECO:0007669"/>
    <property type="project" value="InterPro"/>
</dbReference>
<dbReference type="GO" id="GO:0051087">
    <property type="term" value="F:protein-folding chaperone binding"/>
    <property type="evidence" value="ECO:0007669"/>
    <property type="project" value="InterPro"/>
</dbReference>
<dbReference type="GO" id="GO:0044571">
    <property type="term" value="P:[2Fe-2S] cluster assembly"/>
    <property type="evidence" value="ECO:0007669"/>
    <property type="project" value="InterPro"/>
</dbReference>
<dbReference type="GO" id="GO:0051259">
    <property type="term" value="P:protein complex oligomerization"/>
    <property type="evidence" value="ECO:0007669"/>
    <property type="project" value="InterPro"/>
</dbReference>
<dbReference type="GO" id="GO:0006457">
    <property type="term" value="P:protein folding"/>
    <property type="evidence" value="ECO:0007669"/>
    <property type="project" value="UniProtKB-UniRule"/>
</dbReference>
<dbReference type="CDD" id="cd06257">
    <property type="entry name" value="DnaJ"/>
    <property type="match status" value="1"/>
</dbReference>
<dbReference type="Gene3D" id="1.10.287.110">
    <property type="entry name" value="DnaJ domain"/>
    <property type="match status" value="1"/>
</dbReference>
<dbReference type="Gene3D" id="1.20.1280.20">
    <property type="entry name" value="HscB, C-terminal domain"/>
    <property type="match status" value="1"/>
</dbReference>
<dbReference type="HAMAP" id="MF_00682">
    <property type="entry name" value="HscB"/>
    <property type="match status" value="1"/>
</dbReference>
<dbReference type="InterPro" id="IPR001623">
    <property type="entry name" value="DnaJ_domain"/>
</dbReference>
<dbReference type="InterPro" id="IPR004640">
    <property type="entry name" value="HscB"/>
</dbReference>
<dbReference type="InterPro" id="IPR036386">
    <property type="entry name" value="HscB_C_sf"/>
</dbReference>
<dbReference type="InterPro" id="IPR009073">
    <property type="entry name" value="HscB_oligo_C"/>
</dbReference>
<dbReference type="InterPro" id="IPR036869">
    <property type="entry name" value="J_dom_sf"/>
</dbReference>
<dbReference type="NCBIfam" id="TIGR00714">
    <property type="entry name" value="hscB"/>
    <property type="match status" value="1"/>
</dbReference>
<dbReference type="NCBIfam" id="NF003449">
    <property type="entry name" value="PRK05014.1"/>
    <property type="match status" value="1"/>
</dbReference>
<dbReference type="PANTHER" id="PTHR14021">
    <property type="entry name" value="IRON-SULFUR CLUSTER CO-CHAPERONE PROTEIN HSCB"/>
    <property type="match status" value="1"/>
</dbReference>
<dbReference type="PANTHER" id="PTHR14021:SF15">
    <property type="entry name" value="IRON-SULFUR CLUSTER CO-CHAPERONE PROTEIN HSCB"/>
    <property type="match status" value="1"/>
</dbReference>
<dbReference type="Pfam" id="PF00226">
    <property type="entry name" value="DnaJ"/>
    <property type="match status" value="1"/>
</dbReference>
<dbReference type="Pfam" id="PF07743">
    <property type="entry name" value="HSCB_C"/>
    <property type="match status" value="1"/>
</dbReference>
<dbReference type="SMART" id="SM00271">
    <property type="entry name" value="DnaJ"/>
    <property type="match status" value="1"/>
</dbReference>
<dbReference type="SUPFAM" id="SSF46565">
    <property type="entry name" value="Chaperone J-domain"/>
    <property type="match status" value="1"/>
</dbReference>
<dbReference type="SUPFAM" id="SSF47144">
    <property type="entry name" value="HSC20 (HSCB), C-terminal oligomerisation domain"/>
    <property type="match status" value="1"/>
</dbReference>
<dbReference type="PROSITE" id="PS50076">
    <property type="entry name" value="DNAJ_2"/>
    <property type="match status" value="1"/>
</dbReference>
<evidence type="ECO:0000255" key="1">
    <source>
        <dbReference type="HAMAP-Rule" id="MF_00682"/>
    </source>
</evidence>
<reference key="1">
    <citation type="submission" date="2002-12" db="EMBL/GenBank/DDBJ databases">
        <title>Complete genome sequence of Vibrio vulnificus CMCP6.</title>
        <authorList>
            <person name="Rhee J.H."/>
            <person name="Kim S.Y."/>
            <person name="Chung S.S."/>
            <person name="Kim J.J."/>
            <person name="Moon Y.H."/>
            <person name="Jeong H."/>
            <person name="Choy H.E."/>
        </authorList>
    </citation>
    <scope>NUCLEOTIDE SEQUENCE [LARGE SCALE GENOMIC DNA]</scope>
    <source>
        <strain>CMCP6</strain>
    </source>
</reference>
<name>HSCB_VIBVU</name>
<protein>
    <recommendedName>
        <fullName evidence="1">Co-chaperone protein HscB homolog</fullName>
    </recommendedName>
</protein>
<proteinExistence type="inferred from homology"/>
<accession>Q8DEZ0</accession>
<gene>
    <name evidence="1" type="primary">hscB</name>
    <name type="ordered locus">VV1_0435</name>
</gene>
<sequence>MNHFELFGLPPQFSLDGSLLSSQFRELQKRFHPDNFATASERDRLLAVQKAAQINDAYQVLKNPISRAEYLLSQNGLEIRGEQQTMQDPMFLMEQMELREELEEIPHGSDAESALAAFDARVSKMYKQHLATIEQELNDAQWPQAADRVRKLKFIAKLKNEIELVEEKLFG</sequence>
<feature type="chain" id="PRO_0000070995" description="Co-chaperone protein HscB homolog">
    <location>
        <begin position="1"/>
        <end position="171"/>
    </location>
</feature>
<feature type="domain" description="J" evidence="1">
    <location>
        <begin position="2"/>
        <end position="74"/>
    </location>
</feature>
<organism>
    <name type="scientific">Vibrio vulnificus (strain CMCP6)</name>
    <dbReference type="NCBI Taxonomy" id="216895"/>
    <lineage>
        <taxon>Bacteria</taxon>
        <taxon>Pseudomonadati</taxon>
        <taxon>Pseudomonadota</taxon>
        <taxon>Gammaproteobacteria</taxon>
        <taxon>Vibrionales</taxon>
        <taxon>Vibrionaceae</taxon>
        <taxon>Vibrio</taxon>
    </lineage>
</organism>
<keyword id="KW-0143">Chaperone</keyword>